<dbReference type="EMBL" id="CP001191">
    <property type="protein sequence ID" value="ACI57528.1"/>
    <property type="molecule type" value="Genomic_DNA"/>
</dbReference>
<dbReference type="RefSeq" id="WP_003589162.1">
    <property type="nucleotide sequence ID" value="NC_011369.1"/>
</dbReference>
<dbReference type="SMR" id="B5ZXR9"/>
<dbReference type="STRING" id="395492.Rleg2_4269"/>
<dbReference type="KEGG" id="rlt:Rleg2_4269"/>
<dbReference type="eggNOG" id="COG0292">
    <property type="taxonomic scope" value="Bacteria"/>
</dbReference>
<dbReference type="HOGENOM" id="CLU_123265_0_1_5"/>
<dbReference type="Proteomes" id="UP000008330">
    <property type="component" value="Chromosome"/>
</dbReference>
<dbReference type="GO" id="GO:1990904">
    <property type="term" value="C:ribonucleoprotein complex"/>
    <property type="evidence" value="ECO:0007669"/>
    <property type="project" value="UniProtKB-KW"/>
</dbReference>
<dbReference type="GO" id="GO:0005840">
    <property type="term" value="C:ribosome"/>
    <property type="evidence" value="ECO:0007669"/>
    <property type="project" value="UniProtKB-KW"/>
</dbReference>
<dbReference type="GO" id="GO:0019843">
    <property type="term" value="F:rRNA binding"/>
    <property type="evidence" value="ECO:0007669"/>
    <property type="project" value="UniProtKB-UniRule"/>
</dbReference>
<dbReference type="GO" id="GO:0003735">
    <property type="term" value="F:structural constituent of ribosome"/>
    <property type="evidence" value="ECO:0007669"/>
    <property type="project" value="InterPro"/>
</dbReference>
<dbReference type="GO" id="GO:0000027">
    <property type="term" value="P:ribosomal large subunit assembly"/>
    <property type="evidence" value="ECO:0007669"/>
    <property type="project" value="UniProtKB-UniRule"/>
</dbReference>
<dbReference type="GO" id="GO:0006412">
    <property type="term" value="P:translation"/>
    <property type="evidence" value="ECO:0007669"/>
    <property type="project" value="InterPro"/>
</dbReference>
<dbReference type="CDD" id="cd07026">
    <property type="entry name" value="Ribosomal_L20"/>
    <property type="match status" value="1"/>
</dbReference>
<dbReference type="FunFam" id="1.10.1900.20:FF:000001">
    <property type="entry name" value="50S ribosomal protein L20"/>
    <property type="match status" value="1"/>
</dbReference>
<dbReference type="Gene3D" id="6.10.160.10">
    <property type="match status" value="1"/>
</dbReference>
<dbReference type="Gene3D" id="1.10.1900.20">
    <property type="entry name" value="Ribosomal protein L20"/>
    <property type="match status" value="1"/>
</dbReference>
<dbReference type="HAMAP" id="MF_00382">
    <property type="entry name" value="Ribosomal_bL20"/>
    <property type="match status" value="1"/>
</dbReference>
<dbReference type="InterPro" id="IPR005813">
    <property type="entry name" value="Ribosomal_bL20"/>
</dbReference>
<dbReference type="InterPro" id="IPR049946">
    <property type="entry name" value="RIBOSOMAL_L20_CS"/>
</dbReference>
<dbReference type="InterPro" id="IPR035566">
    <property type="entry name" value="Ribosomal_protein_bL20_C"/>
</dbReference>
<dbReference type="NCBIfam" id="TIGR01032">
    <property type="entry name" value="rplT_bact"/>
    <property type="match status" value="1"/>
</dbReference>
<dbReference type="PANTHER" id="PTHR10986">
    <property type="entry name" value="39S RIBOSOMAL PROTEIN L20"/>
    <property type="match status" value="1"/>
</dbReference>
<dbReference type="Pfam" id="PF00453">
    <property type="entry name" value="Ribosomal_L20"/>
    <property type="match status" value="1"/>
</dbReference>
<dbReference type="PRINTS" id="PR00062">
    <property type="entry name" value="RIBOSOMALL20"/>
</dbReference>
<dbReference type="SUPFAM" id="SSF74731">
    <property type="entry name" value="Ribosomal protein L20"/>
    <property type="match status" value="1"/>
</dbReference>
<dbReference type="PROSITE" id="PS00937">
    <property type="entry name" value="RIBOSOMAL_L20"/>
    <property type="match status" value="1"/>
</dbReference>
<name>RL20_RHILW</name>
<comment type="function">
    <text evidence="1">Binds directly to 23S ribosomal RNA and is necessary for the in vitro assembly process of the 50S ribosomal subunit. It is not involved in the protein synthesizing functions of that subunit.</text>
</comment>
<comment type="similarity">
    <text evidence="1">Belongs to the bacterial ribosomal protein bL20 family.</text>
</comment>
<reference key="1">
    <citation type="journal article" date="2010" name="Stand. Genomic Sci.">
        <title>Complete genome sequence of Rhizobium leguminosarum bv trifolii strain WSM2304, an effective microsymbiont of the South American clover Trifolium polymorphum.</title>
        <authorList>
            <person name="Reeve W."/>
            <person name="O'Hara G."/>
            <person name="Chain P."/>
            <person name="Ardley J."/>
            <person name="Brau L."/>
            <person name="Nandesena K."/>
            <person name="Tiwari R."/>
            <person name="Malfatti S."/>
            <person name="Kiss H."/>
            <person name="Lapidus A."/>
            <person name="Copeland A."/>
            <person name="Nolan M."/>
            <person name="Land M."/>
            <person name="Ivanova N."/>
            <person name="Mavromatis K."/>
            <person name="Markowitz V."/>
            <person name="Kyrpides N."/>
            <person name="Melino V."/>
            <person name="Denton M."/>
            <person name="Yates R."/>
            <person name="Howieson J."/>
        </authorList>
    </citation>
    <scope>NUCLEOTIDE SEQUENCE [LARGE SCALE GENOMIC DNA]</scope>
    <source>
        <strain>WSM2304</strain>
    </source>
</reference>
<accession>B5ZXR9</accession>
<sequence>MARVKRGVTAHAKHKKVLKAAKGFYGRRKNTIRTAKAAVDRSKQYAYRDRKVNKRNFRALWIQRINAAVREFGLTYGRFIDGLNKAGIEVDRKVLSDMAIHEPEAFGALVNAAKKALEYLKEAGTANEFEGAVK</sequence>
<evidence type="ECO:0000255" key="1">
    <source>
        <dbReference type="HAMAP-Rule" id="MF_00382"/>
    </source>
</evidence>
<evidence type="ECO:0000305" key="2"/>
<feature type="chain" id="PRO_1000122360" description="Large ribosomal subunit protein bL20">
    <location>
        <begin position="1"/>
        <end position="134"/>
    </location>
</feature>
<protein>
    <recommendedName>
        <fullName evidence="1">Large ribosomal subunit protein bL20</fullName>
    </recommendedName>
    <alternativeName>
        <fullName evidence="2">50S ribosomal protein L20</fullName>
    </alternativeName>
</protein>
<organism>
    <name type="scientific">Rhizobium leguminosarum bv. trifolii (strain WSM2304)</name>
    <dbReference type="NCBI Taxonomy" id="395492"/>
    <lineage>
        <taxon>Bacteria</taxon>
        <taxon>Pseudomonadati</taxon>
        <taxon>Pseudomonadota</taxon>
        <taxon>Alphaproteobacteria</taxon>
        <taxon>Hyphomicrobiales</taxon>
        <taxon>Rhizobiaceae</taxon>
        <taxon>Rhizobium/Agrobacterium group</taxon>
        <taxon>Rhizobium</taxon>
    </lineage>
</organism>
<proteinExistence type="inferred from homology"/>
<keyword id="KW-1185">Reference proteome</keyword>
<keyword id="KW-0687">Ribonucleoprotein</keyword>
<keyword id="KW-0689">Ribosomal protein</keyword>
<keyword id="KW-0694">RNA-binding</keyword>
<keyword id="KW-0699">rRNA-binding</keyword>
<gene>
    <name evidence="1" type="primary">rplT</name>
    <name type="ordered locus">Rleg2_4269</name>
</gene>